<sequence length="217" mass="24423">MQKFTLHKGLVAPMDRENVDTDAIIPKQFLKSIKKTGFGPNLFDEWRYLDQPGQPGVPESARKPNPDFVLNQPRYAGASILLARKNFGCGSSREHAPWALDQYGFRAIIAPSFADIFFNNSFKNGLLPIVLPEATVSQLFDEVHAFPGYELTVDLERQVIVRAQGAEIPFEVNAFRKYCLLNGFDDIGLTLRQADKIRAFEAERLATKPWLAHTMPA</sequence>
<name>LEUD_PARC0</name>
<proteinExistence type="inferred from homology"/>
<dbReference type="EC" id="4.2.1.33" evidence="1"/>
<dbReference type="EMBL" id="CP000512">
    <property type="protein sequence ID" value="ABM31813.1"/>
    <property type="molecule type" value="Genomic_DNA"/>
</dbReference>
<dbReference type="RefSeq" id="WP_011794365.1">
    <property type="nucleotide sequence ID" value="NC_008752.1"/>
</dbReference>
<dbReference type="SMR" id="A1TLH5"/>
<dbReference type="STRING" id="397945.Aave_1222"/>
<dbReference type="GeneID" id="79790882"/>
<dbReference type="KEGG" id="aav:Aave_1222"/>
<dbReference type="eggNOG" id="COG0066">
    <property type="taxonomic scope" value="Bacteria"/>
</dbReference>
<dbReference type="HOGENOM" id="CLU_081378_0_3_4"/>
<dbReference type="OrthoDB" id="9777465at2"/>
<dbReference type="UniPathway" id="UPA00048">
    <property type="reaction ID" value="UER00071"/>
</dbReference>
<dbReference type="Proteomes" id="UP000002596">
    <property type="component" value="Chromosome"/>
</dbReference>
<dbReference type="GO" id="GO:0009316">
    <property type="term" value="C:3-isopropylmalate dehydratase complex"/>
    <property type="evidence" value="ECO:0007669"/>
    <property type="project" value="InterPro"/>
</dbReference>
<dbReference type="GO" id="GO:0003861">
    <property type="term" value="F:3-isopropylmalate dehydratase activity"/>
    <property type="evidence" value="ECO:0007669"/>
    <property type="project" value="UniProtKB-UniRule"/>
</dbReference>
<dbReference type="GO" id="GO:0009098">
    <property type="term" value="P:L-leucine biosynthetic process"/>
    <property type="evidence" value="ECO:0007669"/>
    <property type="project" value="UniProtKB-UniRule"/>
</dbReference>
<dbReference type="CDD" id="cd01577">
    <property type="entry name" value="IPMI_Swivel"/>
    <property type="match status" value="1"/>
</dbReference>
<dbReference type="FunFam" id="3.20.19.10:FF:000003">
    <property type="entry name" value="3-isopropylmalate dehydratase small subunit"/>
    <property type="match status" value="1"/>
</dbReference>
<dbReference type="Gene3D" id="3.20.19.10">
    <property type="entry name" value="Aconitase, domain 4"/>
    <property type="match status" value="1"/>
</dbReference>
<dbReference type="HAMAP" id="MF_01031">
    <property type="entry name" value="LeuD_type1"/>
    <property type="match status" value="1"/>
</dbReference>
<dbReference type="InterPro" id="IPR004431">
    <property type="entry name" value="3-IsopropMal_deHydase_ssu"/>
</dbReference>
<dbReference type="InterPro" id="IPR015928">
    <property type="entry name" value="Aconitase/3IPM_dehydase_swvl"/>
</dbReference>
<dbReference type="InterPro" id="IPR000573">
    <property type="entry name" value="AconitaseA/IPMdHydase_ssu_swvl"/>
</dbReference>
<dbReference type="InterPro" id="IPR033940">
    <property type="entry name" value="IPMI_Swivel"/>
</dbReference>
<dbReference type="InterPro" id="IPR050075">
    <property type="entry name" value="LeuD"/>
</dbReference>
<dbReference type="NCBIfam" id="TIGR00171">
    <property type="entry name" value="leuD"/>
    <property type="match status" value="1"/>
</dbReference>
<dbReference type="NCBIfam" id="NF002458">
    <property type="entry name" value="PRK01641.1"/>
    <property type="match status" value="1"/>
</dbReference>
<dbReference type="PANTHER" id="PTHR43345:SF5">
    <property type="entry name" value="3-ISOPROPYLMALATE DEHYDRATASE SMALL SUBUNIT"/>
    <property type="match status" value="1"/>
</dbReference>
<dbReference type="PANTHER" id="PTHR43345">
    <property type="entry name" value="3-ISOPROPYLMALATE DEHYDRATASE SMALL SUBUNIT 2-RELATED-RELATED"/>
    <property type="match status" value="1"/>
</dbReference>
<dbReference type="Pfam" id="PF00694">
    <property type="entry name" value="Aconitase_C"/>
    <property type="match status" value="1"/>
</dbReference>
<dbReference type="SUPFAM" id="SSF52016">
    <property type="entry name" value="LeuD/IlvD-like"/>
    <property type="match status" value="1"/>
</dbReference>
<organism>
    <name type="scientific">Paracidovorax citrulli (strain AAC00-1)</name>
    <name type="common">Acidovorax citrulli</name>
    <dbReference type="NCBI Taxonomy" id="397945"/>
    <lineage>
        <taxon>Bacteria</taxon>
        <taxon>Pseudomonadati</taxon>
        <taxon>Pseudomonadota</taxon>
        <taxon>Betaproteobacteria</taxon>
        <taxon>Burkholderiales</taxon>
        <taxon>Comamonadaceae</taxon>
        <taxon>Paracidovorax</taxon>
    </lineage>
</organism>
<accession>A1TLH5</accession>
<feature type="chain" id="PRO_1000063718" description="3-isopropylmalate dehydratase small subunit">
    <location>
        <begin position="1"/>
        <end position="217"/>
    </location>
</feature>
<gene>
    <name evidence="1" type="primary">leuD</name>
    <name type="ordered locus">Aave_1222</name>
</gene>
<keyword id="KW-0028">Amino-acid biosynthesis</keyword>
<keyword id="KW-0100">Branched-chain amino acid biosynthesis</keyword>
<keyword id="KW-0432">Leucine biosynthesis</keyword>
<keyword id="KW-0456">Lyase</keyword>
<protein>
    <recommendedName>
        <fullName evidence="1">3-isopropylmalate dehydratase small subunit</fullName>
        <ecNumber evidence="1">4.2.1.33</ecNumber>
    </recommendedName>
    <alternativeName>
        <fullName evidence="1">Alpha-IPM isomerase</fullName>
        <shortName evidence="1">IPMI</shortName>
    </alternativeName>
    <alternativeName>
        <fullName evidence="1">Isopropylmalate isomerase</fullName>
    </alternativeName>
</protein>
<evidence type="ECO:0000255" key="1">
    <source>
        <dbReference type="HAMAP-Rule" id="MF_01031"/>
    </source>
</evidence>
<comment type="function">
    <text evidence="1">Catalyzes the isomerization between 2-isopropylmalate and 3-isopropylmalate, via the formation of 2-isopropylmaleate.</text>
</comment>
<comment type="catalytic activity">
    <reaction evidence="1">
        <text>(2R,3S)-3-isopropylmalate = (2S)-2-isopropylmalate</text>
        <dbReference type="Rhea" id="RHEA:32287"/>
        <dbReference type="ChEBI" id="CHEBI:1178"/>
        <dbReference type="ChEBI" id="CHEBI:35121"/>
        <dbReference type="EC" id="4.2.1.33"/>
    </reaction>
</comment>
<comment type="pathway">
    <text evidence="1">Amino-acid biosynthesis; L-leucine biosynthesis; L-leucine from 3-methyl-2-oxobutanoate: step 2/4.</text>
</comment>
<comment type="subunit">
    <text evidence="1">Heterodimer of LeuC and LeuD.</text>
</comment>
<comment type="similarity">
    <text evidence="1">Belongs to the LeuD family. LeuD type 1 subfamily.</text>
</comment>
<reference key="1">
    <citation type="submission" date="2006-12" db="EMBL/GenBank/DDBJ databases">
        <title>Complete sequence of Acidovorax avenae subsp. citrulli AAC00-1.</title>
        <authorList>
            <person name="Copeland A."/>
            <person name="Lucas S."/>
            <person name="Lapidus A."/>
            <person name="Barry K."/>
            <person name="Detter J.C."/>
            <person name="Glavina del Rio T."/>
            <person name="Dalin E."/>
            <person name="Tice H."/>
            <person name="Pitluck S."/>
            <person name="Kiss H."/>
            <person name="Brettin T."/>
            <person name="Bruce D."/>
            <person name="Han C."/>
            <person name="Tapia R."/>
            <person name="Gilna P."/>
            <person name="Schmutz J."/>
            <person name="Larimer F."/>
            <person name="Land M."/>
            <person name="Hauser L."/>
            <person name="Kyrpides N."/>
            <person name="Kim E."/>
            <person name="Stahl D."/>
            <person name="Richardson P."/>
        </authorList>
    </citation>
    <scope>NUCLEOTIDE SEQUENCE [LARGE SCALE GENOMIC DNA]</scope>
    <source>
        <strain>AAC00-1</strain>
    </source>
</reference>